<feature type="chain" id="PRO_0000133121" description="Replication protein E1">
    <location>
        <begin position="1"/>
        <end position="607"/>
    </location>
</feature>
<feature type="domain" description="SF3 helicase" evidence="1">
    <location>
        <begin position="409"/>
        <end position="559"/>
    </location>
</feature>
<feature type="region of interest" description="DNA-binding region" evidence="1">
    <location>
        <begin position="147"/>
        <end position="310"/>
    </location>
</feature>
<feature type="region of interest" description="Disordered" evidence="2">
    <location>
        <begin position="583"/>
        <end position="607"/>
    </location>
</feature>
<feature type="short sequence motif" description="Nuclear localization signal" evidence="1">
    <location>
        <begin position="81"/>
        <end position="83"/>
    </location>
</feature>
<feature type="short sequence motif" description="Nuclear export signal" evidence="1">
    <location>
        <begin position="94"/>
        <end position="103"/>
    </location>
</feature>
<feature type="compositionally biased region" description="Polar residues" evidence="2">
    <location>
        <begin position="590"/>
        <end position="607"/>
    </location>
</feature>
<feature type="binding site" evidence="1">
    <location>
        <begin position="435"/>
        <end position="442"/>
    </location>
    <ligand>
        <name>ATP</name>
        <dbReference type="ChEBI" id="CHEBI:30616"/>
    </ligand>
</feature>
<feature type="modified residue" description="Phosphoserine; by host" evidence="1">
    <location>
        <position position="87"/>
    </location>
</feature>
<feature type="modified residue" description="Phosphoserine; by host" evidence="1">
    <location>
        <position position="95"/>
    </location>
</feature>
<feature type="cross-link" description="Glycyl lysine isopeptide (Lys-Gly) (interchain with G-Cter in SUMO)" evidence="1">
    <location>
        <position position="516"/>
    </location>
</feature>
<gene>
    <name evidence="1" type="primary">E1</name>
</gene>
<protein>
    <recommendedName>
        <fullName evidence="1">Replication protein E1</fullName>
        <ecNumber evidence="1">5.6.2.4</ecNumber>
    </recommendedName>
    <alternativeName>
        <fullName evidence="1">ATP-dependent helicase E1</fullName>
    </alternativeName>
    <alternativeName>
        <fullName evidence="1">DNA 3'-5' helicase E1</fullName>
    </alternativeName>
</protein>
<keyword id="KW-0067">ATP-binding</keyword>
<keyword id="KW-0235">DNA replication</keyword>
<keyword id="KW-0238">DNA-binding</keyword>
<keyword id="KW-0244">Early protein</keyword>
<keyword id="KW-0347">Helicase</keyword>
<keyword id="KW-1048">Host nucleus</keyword>
<keyword id="KW-0378">Hydrolase</keyword>
<keyword id="KW-0413">Isomerase</keyword>
<keyword id="KW-1017">Isopeptide bond</keyword>
<keyword id="KW-0547">Nucleotide-binding</keyword>
<keyword id="KW-0597">Phosphoprotein</keyword>
<keyword id="KW-1185">Reference proteome</keyword>
<keyword id="KW-0832">Ubl conjugation</keyword>
<dbReference type="EC" id="5.6.2.4" evidence="1"/>
<dbReference type="EMBL" id="U31781">
    <property type="protein sequence ID" value="AAA79410.1"/>
    <property type="molecule type" value="Genomic_DNA"/>
</dbReference>
<dbReference type="SMR" id="P50761"/>
<dbReference type="Proteomes" id="UP000009112">
    <property type="component" value="Segment"/>
</dbReference>
<dbReference type="GO" id="GO:0042025">
    <property type="term" value="C:host cell nucleus"/>
    <property type="evidence" value="ECO:0007669"/>
    <property type="project" value="UniProtKB-SubCell"/>
</dbReference>
<dbReference type="GO" id="GO:0005524">
    <property type="term" value="F:ATP binding"/>
    <property type="evidence" value="ECO:0007669"/>
    <property type="project" value="UniProtKB-UniRule"/>
</dbReference>
<dbReference type="GO" id="GO:0016887">
    <property type="term" value="F:ATP hydrolysis activity"/>
    <property type="evidence" value="ECO:0007669"/>
    <property type="project" value="RHEA"/>
</dbReference>
<dbReference type="GO" id="GO:0003677">
    <property type="term" value="F:DNA binding"/>
    <property type="evidence" value="ECO:0007669"/>
    <property type="project" value="UniProtKB-UniRule"/>
</dbReference>
<dbReference type="GO" id="GO:0003678">
    <property type="term" value="F:DNA helicase activity"/>
    <property type="evidence" value="ECO:0007669"/>
    <property type="project" value="UniProtKB-UniRule"/>
</dbReference>
<dbReference type="GO" id="GO:0006260">
    <property type="term" value="P:DNA replication"/>
    <property type="evidence" value="ECO:0007669"/>
    <property type="project" value="UniProtKB-UniRule"/>
</dbReference>
<dbReference type="Gene3D" id="3.40.1310.10">
    <property type="match status" value="1"/>
</dbReference>
<dbReference type="Gene3D" id="3.40.50.300">
    <property type="entry name" value="P-loop containing nucleotide triphosphate hydrolases"/>
    <property type="match status" value="1"/>
</dbReference>
<dbReference type="Gene3D" id="1.10.10.510">
    <property type="entry name" value="Zinc finger, large T-antigen D1 domain"/>
    <property type="match status" value="1"/>
</dbReference>
<dbReference type="HAMAP" id="MF_04000">
    <property type="entry name" value="PPV_E1"/>
    <property type="match status" value="1"/>
</dbReference>
<dbReference type="InterPro" id="IPR014015">
    <property type="entry name" value="Helicase_SF3_DNA-vir"/>
</dbReference>
<dbReference type="InterPro" id="IPR027417">
    <property type="entry name" value="P-loop_NTPase"/>
</dbReference>
<dbReference type="InterPro" id="IPR001177">
    <property type="entry name" value="PPV_DNA_helicase_E1_C"/>
</dbReference>
<dbReference type="InterPro" id="IPR014000">
    <property type="entry name" value="PPV_DNA_helicase_E1_N"/>
</dbReference>
<dbReference type="InterPro" id="IPR046832">
    <property type="entry name" value="PPV_E1_DBD"/>
</dbReference>
<dbReference type="InterPro" id="IPR046935">
    <property type="entry name" value="PPV_E1_DBD_sf"/>
</dbReference>
<dbReference type="InterPro" id="IPR016393">
    <property type="entry name" value="Rep_E1_papillomaV"/>
</dbReference>
<dbReference type="InterPro" id="IPR037102">
    <property type="entry name" value="Znf_lg_T-Ag_D1_dom_sf"/>
</dbReference>
<dbReference type="Pfam" id="PF00519">
    <property type="entry name" value="PPV_E1_C"/>
    <property type="match status" value="1"/>
</dbReference>
<dbReference type="Pfam" id="PF20450">
    <property type="entry name" value="PPV_E1_DBD"/>
    <property type="match status" value="1"/>
</dbReference>
<dbReference type="Pfam" id="PF00524">
    <property type="entry name" value="PPV_E1_N"/>
    <property type="match status" value="1"/>
</dbReference>
<dbReference type="PIRSF" id="PIRSF003383">
    <property type="entry name" value="Rep_E1_papillomaV"/>
    <property type="match status" value="1"/>
</dbReference>
<dbReference type="SUPFAM" id="SSF55464">
    <property type="entry name" value="Origin of replication-binding domain, RBD-like"/>
    <property type="match status" value="1"/>
</dbReference>
<dbReference type="SUPFAM" id="SSF52540">
    <property type="entry name" value="P-loop containing nucleoside triphosphate hydrolases"/>
    <property type="match status" value="1"/>
</dbReference>
<dbReference type="PROSITE" id="PS51206">
    <property type="entry name" value="SF3_HELICASE_1"/>
    <property type="match status" value="1"/>
</dbReference>
<evidence type="ECO:0000255" key="1">
    <source>
        <dbReference type="HAMAP-Rule" id="MF_04000"/>
    </source>
</evidence>
<evidence type="ECO:0000256" key="2">
    <source>
        <dbReference type="SAM" id="MobiDB-lite"/>
    </source>
</evidence>
<organism>
    <name type="scientific">Human papillomavirus 23</name>
    <dbReference type="NCBI Taxonomy" id="37955"/>
    <lineage>
        <taxon>Viruses</taxon>
        <taxon>Monodnaviria</taxon>
        <taxon>Shotokuvirae</taxon>
        <taxon>Cossaviricota</taxon>
        <taxon>Papovaviricetes</taxon>
        <taxon>Zurhausenvirales</taxon>
        <taxon>Papillomaviridae</taxon>
        <taxon>Firstpapillomavirinae</taxon>
        <taxon>Betapapillomavirus</taxon>
        <taxon>Betapapillomavirus 2</taxon>
    </lineage>
</organism>
<accession>P50761</accession>
<reference key="1">
    <citation type="submission" date="1995-10" db="EMBL/GenBank/DDBJ databases">
        <authorList>
            <person name="Delius H."/>
        </authorList>
    </citation>
    <scope>NUCLEOTIDE SEQUENCE [GENOMIC DNA]</scope>
</reference>
<name>VE1_HPV23</name>
<proteinExistence type="inferred from homology"/>
<organismHost>
    <name type="scientific">Homo sapiens</name>
    <name type="common">Human</name>
    <dbReference type="NCBI Taxonomy" id="9606"/>
</organismHost>
<sequence>MDDDKGTDTAKEGCSTWCLLEAACSDDSDLDDSLEKLFEENAESDVSDLINDDDNAAQGNSRELLCQQESEECEQQIQYLKRKYNISPEAVQQLSPRLQSLNLSPGHKSKRRLFVEQDSGLELSLNEVEDFTQELEVPASAPGPAAQGGVGLGHIESLLRCKNAKAVLLHKFKEGFGISYNELTRQFKSNKTCCKHWVLAIYGAKEELIDASKQLLQQHCSYIWLQTYTPMSLYLCCFNVAKSRETVVKLLISMLQIHENHILSEPPKNRSVPVALFWYKGSMNPNVYAFGEYPEWIVTQTMIQHQTADSIQFDLSRMIQWAYDNDHLDECSIAYNYAKLADTDSNARAFLAQNSQAKHVRDCAQMVKHYKRGEMREMTISAWVHHCISRIEGDGQWQDIVKFLRYQGLNFIVFLDKFRTFLQNFPKKNCLLIYGPPDTGKSMFTMSLMKALRGQVISFANSKSQFWLQPLADAKIALLDDATEVCWQYIDMFLRNGLDGNVVSLDMKHRAPCQMKFPPLIITSNISLKKEKKFPYLHSRIYEFEFPNRFPFDSDDKPLFKLTDQSWASFFKRLWIQLGLSDQEDEGEDGSTQRTFQCTTRQVNGPV</sequence>
<comment type="function">
    <text evidence="1">ATP-dependent DNA 3'-5' helicase required for initiation of viral DNA replication. It forms a complex with the viral E2 protein. The E1-E2 complex binds to the replication origin which contains binding sites for both proteins. During the initial step, a dimer of E1 interacts with a dimer of protein E2 leading to a complex that binds the viral origin of replication with high specificity. Then, a second dimer of E1 displaces the E2 dimer in an ATP-dependent manner to form the E1 tetramer. Following this, two E1 monomers are added to each half of the site, which results in the formation of two E1 trimers on the viral ori. Subsequently, two hexamers will be created. The double hexamer acts as a bi-directional helicase machinery and unwinds the viral DNA and then recruits the host DNA polymerase to start replication.</text>
</comment>
<comment type="catalytic activity">
    <reaction evidence="1">
        <text>Couples ATP hydrolysis with the unwinding of duplex DNA by translocating in the 3'-5' direction.</text>
        <dbReference type="EC" id="5.6.2.4"/>
    </reaction>
</comment>
<comment type="catalytic activity">
    <reaction evidence="1">
        <text>ATP + H2O = ADP + phosphate + H(+)</text>
        <dbReference type="Rhea" id="RHEA:13065"/>
        <dbReference type="ChEBI" id="CHEBI:15377"/>
        <dbReference type="ChEBI" id="CHEBI:15378"/>
        <dbReference type="ChEBI" id="CHEBI:30616"/>
        <dbReference type="ChEBI" id="CHEBI:43474"/>
        <dbReference type="ChEBI" id="CHEBI:456216"/>
        <dbReference type="EC" id="5.6.2.4"/>
    </reaction>
</comment>
<comment type="subunit">
    <text evidence="1">Can form hexamers. Interacts with E2 protein; this interaction increases E1 DNA binding specificity. Interacts with host DNA polymerase subunit POLA2. Interacts with host single stranded DNA-binding protein RPA1. Interacts with host TOP1; this interaction stimulates the enzymatic activity of TOP1.</text>
</comment>
<comment type="subcellular location">
    <subcellularLocation>
        <location evidence="1">Host nucleus</location>
    </subcellularLocation>
</comment>
<comment type="PTM">
    <text evidence="1">Phosphorylated.</text>
</comment>
<comment type="PTM">
    <text evidence="1">Sumoylated.</text>
</comment>
<comment type="similarity">
    <text evidence="1">Belongs to the papillomaviridae E1 protein family.</text>
</comment>